<sequence>MSSISNVYHDYSSFSNATTFSQVYQNFNQLDNLNVFEKLWGSYYYYMANDLFATGLLFFLTHEIFYFGRCLPWAIIDRIPYFRKWKIQDEKIPSDKEQWECLKSVLTSHFLVEAFPIWFFHPLCQKIGISYQVPFPKITDMLIQWAVFFVLEDTWHYWFHRGLHYGVFYKYIHKQHHRYAAPFGLAAEYAHPVEVALLGLGTVGIPIVWCLITGNLHLFTVSIWIILRLFQAVDAHSGYEFPWSLHNFLPFWAGADHHDEHHHYFIGGYSSSFRWWDFILDTEAGPKAKKGREDKVKQNVEKLQKKNL</sequence>
<feature type="chain" id="PRO_0000117037" description="C-4 methylsterol oxidase">
    <location>
        <begin position="1"/>
        <end position="308"/>
    </location>
</feature>
<feature type="transmembrane region" description="Helical" evidence="2">
    <location>
        <begin position="56"/>
        <end position="76"/>
    </location>
</feature>
<feature type="domain" description="Fatty acid hydroxylase" evidence="2">
    <location>
        <begin position="145"/>
        <end position="282"/>
    </location>
</feature>
<feature type="short sequence motif" description="Histidine box-1" evidence="10">
    <location>
        <begin position="160"/>
        <end position="164"/>
    </location>
</feature>
<feature type="short sequence motif" description="Histidine box-2" evidence="10">
    <location>
        <begin position="173"/>
        <end position="177"/>
    </location>
</feature>
<feature type="short sequence motif" description="Histidine box-3" evidence="10">
    <location>
        <begin position="257"/>
        <end position="263"/>
    </location>
</feature>
<feature type="mutagenesis site" description="Leads to temperature-sensitive (ts) conditional lethality." evidence="3">
    <original>N</original>
    <variation>D</variation>
    <location>
        <position position="247"/>
    </location>
</feature>
<keyword id="KW-0256">Endoplasmic reticulum</keyword>
<keyword id="KW-0408">Iron</keyword>
<keyword id="KW-0444">Lipid biosynthesis</keyword>
<keyword id="KW-0443">Lipid metabolism</keyword>
<keyword id="KW-0472">Membrane</keyword>
<keyword id="KW-0520">NAD</keyword>
<keyword id="KW-0560">Oxidoreductase</keyword>
<keyword id="KW-1185">Reference proteome</keyword>
<keyword id="KW-0752">Steroid biosynthesis</keyword>
<keyword id="KW-0753">Steroid metabolism</keyword>
<keyword id="KW-0756">Sterol biosynthesis</keyword>
<keyword id="KW-1207">Sterol metabolism</keyword>
<keyword id="KW-0812">Transmembrane</keyword>
<keyword id="KW-1133">Transmembrane helix</keyword>
<protein>
    <recommendedName>
        <fullName evidence="8">C-4 methylsterol oxidase</fullName>
        <ecNumber evidence="3">1.14.18.9</ecNumber>
    </recommendedName>
    <alternativeName>
        <fullName evidence="8">Ergosterol biosynthesis protein 25</fullName>
    </alternativeName>
    <alternativeName>
        <fullName evidence="8">Sterol-C4-methyl oxidase</fullName>
        <shortName evidence="8">SMO</shortName>
    </alternativeName>
</protein>
<comment type="function">
    <text evidence="3 9">C-4 methylsterol oxidase; part of the third module of ergosterol biosynthesis pathway that includes the late steps of the pathway (PubMed:10783002). ERG25 is a catalytic component of the C-4 demethylation complex that catalyzes the conversion of 4,4-dimethylfecosterol into fecosterol via 4-methylfecosterol (PubMed:10783002). Catalyzes the three-step monooxygenation required for the demethylation of 4,4-dimethyl and 4alpha-methylsterols (PubMed:10783002). The third module or late pathway involves the ergosterol synthesis itself through consecutive reactions that mainly occur in the endoplasmic reticulum (ER) membrane. Firstly, the squalene synthase ERG9 catalyzes the condensation of 2 farnesyl pyrophosphate moieties to form squalene, which is the precursor of all steroids. Squalene synthase is crucial for balancing the incorporation of farnesyl diphosphate (FPP) into sterol and nonsterol isoprene synthesis. Secondly, the squalene epoxidase ERG1 catalyzes the stereospecific oxidation of squalene to (S)-2,3-epoxysqualene, which is considered to be a rate-limiting enzyme in steroid biosynthesis. Then, the lanosterol synthase ERG7 catalyzes the cyclization of (S)-2,3 oxidosqualene to lanosterol, a reaction that forms the sterol core. In the next steps, lanosterol is transformed to zymosterol through a complex process involving various demethylation, reduction and desaturation reactions. The lanosterol 14-alpha-demethylase ERG11 (also known as CYP51) catalyzes C14-demethylation of lanosterol to produce 4,4'-dimethyl cholesta-8,14,24-triene-3-beta-ol, which is critical for ergosterol biosynthesis. The C-14 reductase ERG24 reduces the C14=C15 double bond of 4,4-dimethyl-cholesta-8,14,24-trienol to produce 4,4-dimethyl-cholesta-8,24-dienol. 4,4-dimethyl-cholesta-8,24-dienol is substrate of the C-4 demethylation complex ERG25-ERG26-ERG27 in which ERG25 catalyzes the three-step monooxygenation required for the demethylation of 4,4-dimethyl and 4alpha-methylsterols, ERG26 catalyzes the oxidative decarboxylation that results in a reduction of the 3-beta-hydroxy group at the C-3 carbon to an oxo group, and ERG27 is responsible for the reduction of the keto group on the C-3. ERG28 has a role as a scaffold to help anchor ERG25, ERG26 and ERG27 to the endoplasmic reticulum and ERG29 regulates the activity of the iron-containing C4-methylsterol oxidase ERG25. Then, the sterol 24-C-methyltransferase ERG6 catalyzes the methyl transfer from S-adenosyl-methionine to the C-24 of zymosterol to form fecosterol. The C-8 sterol isomerase ERG2 catalyzes the reaction which results in unsaturation at C-7 in the B ring of sterols and thus converts fecosterol to episterol. The sterol-C5-desaturase ERG3 then catalyzes the introduction of a C-5 double bond in the B ring to produce 5-dehydroepisterol. The C-22 sterol desaturase ERG5 further converts 5-dehydroepisterol into ergosta-5,7,22,24(28)-tetraen-3beta-ol by forming the C-22(23) double bond in the sterol side chain. Finally, ergosta-5,7,22,24(28)-tetraen-3beta-ol is substrate of the C-24(28) sterol reductase ERG4 to produce ergosterol (Probable).</text>
</comment>
<comment type="catalytic activity">
    <reaction evidence="10">
        <text>4,4-dimethyl-5alpha-cholest-7-en-3beta-ol + 6 Fe(II)-[cytochrome b5] + 3 O2 + 5 H(+) = 4alpha-carboxy-4beta-methyl-5alpha-cholest-7-ene-3beta-ol + 6 Fe(III)-[cytochrome b5] + 4 H2O</text>
        <dbReference type="Rhea" id="RHEA:55220"/>
        <dbReference type="Rhea" id="RHEA-COMP:10438"/>
        <dbReference type="Rhea" id="RHEA-COMP:10439"/>
        <dbReference type="ChEBI" id="CHEBI:15377"/>
        <dbReference type="ChEBI" id="CHEBI:15378"/>
        <dbReference type="ChEBI" id="CHEBI:15379"/>
        <dbReference type="ChEBI" id="CHEBI:16455"/>
        <dbReference type="ChEBI" id="CHEBI:29033"/>
        <dbReference type="ChEBI" id="CHEBI:29034"/>
        <dbReference type="ChEBI" id="CHEBI:58387"/>
        <dbReference type="EC" id="1.14.18.9"/>
    </reaction>
    <physiologicalReaction direction="left-to-right" evidence="10">
        <dbReference type="Rhea" id="RHEA:55221"/>
    </physiologicalReaction>
</comment>
<comment type="cofactor">
    <cofactor evidence="1">
        <name>Fe cation</name>
        <dbReference type="ChEBI" id="CHEBI:24875"/>
    </cofactor>
</comment>
<comment type="pathway">
    <text evidence="3">Steroid biosynthesis; zymosterol biosynthesis; zymosterol from lanosterol: step 3/6.</text>
</comment>
<comment type="subcellular location">
    <subcellularLocation>
        <location evidence="9">Endoplasmic reticulum membrane</location>
        <topology evidence="2">Single-pass membrane protein</topology>
    </subcellularLocation>
</comment>
<comment type="induction">
    <text evidence="4 5 6 7">Expression is induced by fluconazole and in azole-resistant strains (PubMed:15273122, PubMed:15820985). Expression is induced during biofilm formation (PubMed:15075282). Expression is up-regulated when ERG6, CYP51/ERG11 or ERG24 are deleted (PubMed:15473366).</text>
</comment>
<comment type="domain">
    <text evidence="10">The histidine box domains may contain the active site and/or be involved in metal ion binding.</text>
</comment>
<comment type="disruption phenotype">
    <text evidence="3">Essential gene; conditional lethal mutations decrease the production of ergosterol and accumulate 4,4-dimethylzymosterol.</text>
</comment>
<comment type="similarity">
    <text evidence="9">Belongs to the sterol desaturase family.</text>
</comment>
<gene>
    <name evidence="8" type="primary">ERG25</name>
    <name type="ordered locus">CAALFM_CR02370WA</name>
    <name type="ORF">CaO19.11216</name>
    <name type="ORF">CaO19.3732</name>
</gene>
<name>ERG25_CANAL</name>
<reference key="1">
    <citation type="journal article" date="2000" name="Lipids">
        <title>Cloning and sequencing of the Candida albicans C-4 sterol methyl oxidase gene (ERG25) and expression of an ERG25 conditional lethal mutation in Saccharomyces cerevisiae.</title>
        <authorList>
            <person name="Kennedy M.A."/>
            <person name="Johnson T.A."/>
            <person name="Lees N.D."/>
            <person name="Barbuch R."/>
            <person name="Eckstein J.A."/>
            <person name="Bard M."/>
        </authorList>
    </citation>
    <scope>NUCLEOTIDE SEQUENCE [GENOMIC DNA]</scope>
    <scope>FUNCTION</scope>
    <scope>DISRUPTION PHENOTYPE</scope>
    <scope>MUTAGENESIS OF ASN-247</scope>
    <scope>DOMAIN</scope>
    <scope>PATHWAY</scope>
    <source>
        <strain>CAI-8</strain>
    </source>
</reference>
<reference key="2">
    <citation type="journal article" date="2004" name="Proc. Natl. Acad. Sci. U.S.A.">
        <title>The diploid genome sequence of Candida albicans.</title>
        <authorList>
            <person name="Jones T."/>
            <person name="Federspiel N.A."/>
            <person name="Chibana H."/>
            <person name="Dungan J."/>
            <person name="Kalman S."/>
            <person name="Magee B.B."/>
            <person name="Newport G."/>
            <person name="Thorstenson Y.R."/>
            <person name="Agabian N."/>
            <person name="Magee P.T."/>
            <person name="Davis R.W."/>
            <person name="Scherer S."/>
        </authorList>
    </citation>
    <scope>NUCLEOTIDE SEQUENCE [LARGE SCALE GENOMIC DNA]</scope>
    <source>
        <strain>SC5314 / ATCC MYA-2876</strain>
    </source>
</reference>
<reference key="3">
    <citation type="journal article" date="2007" name="Genome Biol.">
        <title>Assembly of the Candida albicans genome into sixteen supercontigs aligned on the eight chromosomes.</title>
        <authorList>
            <person name="van het Hoog M."/>
            <person name="Rast T.J."/>
            <person name="Martchenko M."/>
            <person name="Grindle S."/>
            <person name="Dignard D."/>
            <person name="Hogues H."/>
            <person name="Cuomo C."/>
            <person name="Berriman M."/>
            <person name="Scherer S."/>
            <person name="Magee B.B."/>
            <person name="Whiteway M."/>
            <person name="Chibana H."/>
            <person name="Nantel A."/>
            <person name="Magee P.T."/>
        </authorList>
    </citation>
    <scope>GENOME REANNOTATION</scope>
    <source>
        <strain>SC5314 / ATCC MYA-2876</strain>
    </source>
</reference>
<reference key="4">
    <citation type="journal article" date="2013" name="Genome Biol.">
        <title>Assembly of a phased diploid Candida albicans genome facilitates allele-specific measurements and provides a simple model for repeat and indel structure.</title>
        <authorList>
            <person name="Muzzey D."/>
            <person name="Schwartz K."/>
            <person name="Weissman J.S."/>
            <person name="Sherlock G."/>
        </authorList>
    </citation>
    <scope>NUCLEOTIDE SEQUENCE [LARGE SCALE GENOMIC DNA]</scope>
    <scope>GENOME REANNOTATION</scope>
    <source>
        <strain>SC5314 / ATCC MYA-2876</strain>
    </source>
</reference>
<reference key="5">
    <citation type="journal article" date="2003" name="Med. Mycol.">
        <title>Antifungal activity of fluconazole in combination with lovastatin and their effects on gene expression in the ergosterol and prenylation pathways in Candida albicans.</title>
        <authorList>
            <person name="Song J.L."/>
            <person name="Lyons C.N."/>
            <person name="Holleman S."/>
            <person name="Oliver B.G."/>
            <person name="White T.C."/>
        </authorList>
    </citation>
    <scope>INDUCTION</scope>
</reference>
<reference key="6">
    <citation type="journal article" date="2004" name="Antimicrob. Agents Chemother.">
        <title>Comparison of gene expression profiles of Candida albicans azole-resistant clinical isolates and laboratory strains exposed to drugs inducing multidrug transporters.</title>
        <authorList>
            <person name="Karababa M."/>
            <person name="Coste A.T."/>
            <person name="Rognon B."/>
            <person name="Bille J."/>
            <person name="Sanglard D."/>
        </authorList>
    </citation>
    <scope>INDUCTION</scope>
</reference>
<reference key="7">
    <citation type="journal article" date="2004" name="Eukaryot. Cell">
        <title>Candida albicans biofilms: a developmental state associated with specific and stable gene expression patterns.</title>
        <authorList>
            <person name="Garcia-Sanchez S."/>
            <person name="Aubert S."/>
            <person name="Iraqui I."/>
            <person name="Janbon G."/>
            <person name="Ghigo J.M."/>
            <person name="d'Enfert C."/>
        </authorList>
    </citation>
    <scope>INDUCTION</scope>
</reference>
<reference key="8">
    <citation type="journal article" date="2004" name="Med. Mycol.">
        <title>Ergosterol gene expression in wild-type and ergosterol-deficient mutants of Candida albicans.</title>
        <authorList>
            <person name="Pierson C.A."/>
            <person name="Eckstein J."/>
            <person name="Barbuch R."/>
            <person name="Bard M."/>
        </authorList>
    </citation>
    <scope>INDUCTION</scope>
</reference>
<reference key="9">
    <citation type="journal article" date="2005" name="J. Antimicrob. Chemother.">
        <title>Exposure of Candida albicans to antifungal agents affects expression of SAP2 and SAP9 secreted proteinase genes.</title>
        <authorList>
            <person name="Copping V.M.S."/>
            <person name="Barelle C.J."/>
            <person name="Hube B."/>
            <person name="Gow N.A.R."/>
            <person name="Brown A.J.P."/>
            <person name="Odds F.C."/>
        </authorList>
    </citation>
    <scope>INDUCTION</scope>
</reference>
<reference key="10">
    <citation type="journal article" date="2012" name="Cell">
        <title>A recently evolved transcriptional network controls biofilm development in Candida albicans.</title>
        <authorList>
            <person name="Nobile C.J."/>
            <person name="Fox E.P."/>
            <person name="Nett J.E."/>
            <person name="Sorrells T.R."/>
            <person name="Mitrovich Q.M."/>
            <person name="Hernday A.D."/>
            <person name="Tuch B.B."/>
            <person name="Andes D.R."/>
            <person name="Johnson A.D."/>
        </authorList>
    </citation>
    <scope>INDUCTION</scope>
</reference>
<dbReference type="EC" id="1.14.18.9" evidence="3"/>
<dbReference type="EMBL" id="AF051914">
    <property type="protein sequence ID" value="AAC06014.1"/>
    <property type="molecule type" value="Genomic_DNA"/>
</dbReference>
<dbReference type="EMBL" id="CP017630">
    <property type="protein sequence ID" value="AOW30984.1"/>
    <property type="molecule type" value="Genomic_DNA"/>
</dbReference>
<dbReference type="RefSeq" id="XP_713420.1">
    <property type="nucleotide sequence ID" value="XM_708327.2"/>
</dbReference>
<dbReference type="FunCoup" id="O59933">
    <property type="interactions" value="290"/>
</dbReference>
<dbReference type="STRING" id="237561.O59933"/>
<dbReference type="EnsemblFungi" id="CR_02370W_A-T">
    <property type="protein sequence ID" value="CR_02370W_A-T-p1"/>
    <property type="gene ID" value="CR_02370W_A"/>
</dbReference>
<dbReference type="GeneID" id="3644933"/>
<dbReference type="KEGG" id="cal:CAALFM_CR02370WA"/>
<dbReference type="CGD" id="CAL0000179313">
    <property type="gene designation" value="ERG25"/>
</dbReference>
<dbReference type="VEuPathDB" id="FungiDB:CR_02370W_A"/>
<dbReference type="eggNOG" id="KOG0873">
    <property type="taxonomic scope" value="Eukaryota"/>
</dbReference>
<dbReference type="HOGENOM" id="CLU_047036_5_0_1"/>
<dbReference type="InParanoid" id="O59933"/>
<dbReference type="OMA" id="IVHEFIY"/>
<dbReference type="OrthoDB" id="1658724at2759"/>
<dbReference type="UniPathway" id="UPA00770">
    <property type="reaction ID" value="UER00756"/>
</dbReference>
<dbReference type="PRO" id="PR:O59933"/>
<dbReference type="Proteomes" id="UP000000559">
    <property type="component" value="Chromosome R"/>
</dbReference>
<dbReference type="GO" id="GO:0005783">
    <property type="term" value="C:endoplasmic reticulum"/>
    <property type="evidence" value="ECO:0000250"/>
    <property type="project" value="CGD"/>
</dbReference>
<dbReference type="GO" id="GO:0005789">
    <property type="term" value="C:endoplasmic reticulum membrane"/>
    <property type="evidence" value="ECO:0000318"/>
    <property type="project" value="GO_Central"/>
</dbReference>
<dbReference type="GO" id="GO:0000254">
    <property type="term" value="F:C-4 methylsterol oxidase activity"/>
    <property type="evidence" value="ECO:0000250"/>
    <property type="project" value="CGD"/>
</dbReference>
<dbReference type="GO" id="GO:0005506">
    <property type="term" value="F:iron ion binding"/>
    <property type="evidence" value="ECO:0007669"/>
    <property type="project" value="InterPro"/>
</dbReference>
<dbReference type="GO" id="GO:0006696">
    <property type="term" value="P:ergosterol biosynthetic process"/>
    <property type="evidence" value="ECO:0000250"/>
    <property type="project" value="CGD"/>
</dbReference>
<dbReference type="InterPro" id="IPR006694">
    <property type="entry name" value="Fatty_acid_hydroxylase"/>
</dbReference>
<dbReference type="InterPro" id="IPR050307">
    <property type="entry name" value="Sterol_Desaturase_Related"/>
</dbReference>
<dbReference type="PANTHER" id="PTHR11863">
    <property type="entry name" value="STEROL DESATURASE"/>
    <property type="match status" value="1"/>
</dbReference>
<dbReference type="Pfam" id="PF04116">
    <property type="entry name" value="FA_hydroxylase"/>
    <property type="match status" value="1"/>
</dbReference>
<evidence type="ECO:0000250" key="1">
    <source>
        <dbReference type="UniProtKB" id="P53045"/>
    </source>
</evidence>
<evidence type="ECO:0000255" key="2"/>
<evidence type="ECO:0000269" key="3">
    <source>
    </source>
</evidence>
<evidence type="ECO:0000269" key="4">
    <source>
    </source>
</evidence>
<evidence type="ECO:0000269" key="5">
    <source>
    </source>
</evidence>
<evidence type="ECO:0000269" key="6">
    <source>
    </source>
</evidence>
<evidence type="ECO:0000269" key="7">
    <source>
    </source>
</evidence>
<evidence type="ECO:0000303" key="8">
    <source>
    </source>
</evidence>
<evidence type="ECO:0000305" key="9"/>
<evidence type="ECO:0000305" key="10">
    <source>
    </source>
</evidence>
<proteinExistence type="evidence at protein level"/>
<accession>O59933</accession>
<accession>A0A1D8PS80</accession>
<accession>Q59V08</accession>
<organism>
    <name type="scientific">Candida albicans (strain SC5314 / ATCC MYA-2876)</name>
    <name type="common">Yeast</name>
    <dbReference type="NCBI Taxonomy" id="237561"/>
    <lineage>
        <taxon>Eukaryota</taxon>
        <taxon>Fungi</taxon>
        <taxon>Dikarya</taxon>
        <taxon>Ascomycota</taxon>
        <taxon>Saccharomycotina</taxon>
        <taxon>Pichiomycetes</taxon>
        <taxon>Debaryomycetaceae</taxon>
        <taxon>Candida/Lodderomyces clade</taxon>
        <taxon>Candida</taxon>
    </lineage>
</organism>